<accession>B2TVN1</accession>
<comment type="function">
    <text evidence="1">An aminoacyl-tRNA editing enzyme that deacylates mischarged D-aminoacyl-tRNAs. Also deacylates mischarged glycyl-tRNA(Ala), protecting cells against glycine mischarging by AlaRS. Acts via tRNA-based rather than protein-based catalysis; rejects L-amino acids rather than detecting D-amino acids in the active site. By recycling D-aminoacyl-tRNA to D-amino acids and free tRNA molecules, this enzyme counteracts the toxicity associated with the formation of D-aminoacyl-tRNA entities in vivo and helps enforce protein L-homochirality.</text>
</comment>
<comment type="catalytic activity">
    <reaction evidence="1">
        <text>glycyl-tRNA(Ala) + H2O = tRNA(Ala) + glycine + H(+)</text>
        <dbReference type="Rhea" id="RHEA:53744"/>
        <dbReference type="Rhea" id="RHEA-COMP:9657"/>
        <dbReference type="Rhea" id="RHEA-COMP:13640"/>
        <dbReference type="ChEBI" id="CHEBI:15377"/>
        <dbReference type="ChEBI" id="CHEBI:15378"/>
        <dbReference type="ChEBI" id="CHEBI:57305"/>
        <dbReference type="ChEBI" id="CHEBI:78442"/>
        <dbReference type="ChEBI" id="CHEBI:78522"/>
        <dbReference type="EC" id="3.1.1.96"/>
    </reaction>
</comment>
<comment type="catalytic activity">
    <reaction evidence="1">
        <text>a D-aminoacyl-tRNA + H2O = a tRNA + a D-alpha-amino acid + H(+)</text>
        <dbReference type="Rhea" id="RHEA:13953"/>
        <dbReference type="Rhea" id="RHEA-COMP:10123"/>
        <dbReference type="Rhea" id="RHEA-COMP:10124"/>
        <dbReference type="ChEBI" id="CHEBI:15377"/>
        <dbReference type="ChEBI" id="CHEBI:15378"/>
        <dbReference type="ChEBI" id="CHEBI:59871"/>
        <dbReference type="ChEBI" id="CHEBI:78442"/>
        <dbReference type="ChEBI" id="CHEBI:79333"/>
        <dbReference type="EC" id="3.1.1.96"/>
    </reaction>
</comment>
<comment type="subunit">
    <text evidence="1">Homodimer.</text>
</comment>
<comment type="subcellular location">
    <subcellularLocation>
        <location evidence="1">Cytoplasm</location>
    </subcellularLocation>
</comment>
<comment type="domain">
    <text evidence="1">A Gly-cisPro motif from one monomer fits into the active site of the other monomer to allow specific chiral rejection of L-amino acids.</text>
</comment>
<comment type="similarity">
    <text evidence="1">Belongs to the DTD family.</text>
</comment>
<dbReference type="EC" id="3.1.1.96" evidence="1"/>
<dbReference type="EMBL" id="CP001063">
    <property type="protein sequence ID" value="ACD09153.1"/>
    <property type="molecule type" value="Genomic_DNA"/>
</dbReference>
<dbReference type="RefSeq" id="WP_000560983.1">
    <property type="nucleotide sequence ID" value="NC_010658.1"/>
</dbReference>
<dbReference type="SMR" id="B2TVN1"/>
<dbReference type="STRING" id="344609.SbBS512_E4365"/>
<dbReference type="GeneID" id="93778051"/>
<dbReference type="KEGG" id="sbc:SbBS512_E4365"/>
<dbReference type="HOGENOM" id="CLU_076901_1_0_6"/>
<dbReference type="Proteomes" id="UP000001030">
    <property type="component" value="Chromosome"/>
</dbReference>
<dbReference type="GO" id="GO:0005737">
    <property type="term" value="C:cytoplasm"/>
    <property type="evidence" value="ECO:0007669"/>
    <property type="project" value="UniProtKB-SubCell"/>
</dbReference>
<dbReference type="GO" id="GO:0051500">
    <property type="term" value="F:D-tyrosyl-tRNA(Tyr) deacylase activity"/>
    <property type="evidence" value="ECO:0007669"/>
    <property type="project" value="TreeGrafter"/>
</dbReference>
<dbReference type="GO" id="GO:0106026">
    <property type="term" value="F:Gly-tRNA(Ala) deacylase activity"/>
    <property type="evidence" value="ECO:0007669"/>
    <property type="project" value="UniProtKB-UniRule"/>
</dbReference>
<dbReference type="GO" id="GO:0043908">
    <property type="term" value="F:Ser(Gly)-tRNA(Ala) hydrolase activity"/>
    <property type="evidence" value="ECO:0007669"/>
    <property type="project" value="UniProtKB-UniRule"/>
</dbReference>
<dbReference type="GO" id="GO:0000049">
    <property type="term" value="F:tRNA binding"/>
    <property type="evidence" value="ECO:0007669"/>
    <property type="project" value="UniProtKB-UniRule"/>
</dbReference>
<dbReference type="GO" id="GO:0019478">
    <property type="term" value="P:D-amino acid catabolic process"/>
    <property type="evidence" value="ECO:0007669"/>
    <property type="project" value="UniProtKB-UniRule"/>
</dbReference>
<dbReference type="CDD" id="cd00563">
    <property type="entry name" value="Dtyr_deacylase"/>
    <property type="match status" value="1"/>
</dbReference>
<dbReference type="FunFam" id="3.50.80.10:FF:000001">
    <property type="entry name" value="D-aminoacyl-tRNA deacylase"/>
    <property type="match status" value="1"/>
</dbReference>
<dbReference type="Gene3D" id="3.50.80.10">
    <property type="entry name" value="D-tyrosyl-tRNA(Tyr) deacylase"/>
    <property type="match status" value="1"/>
</dbReference>
<dbReference type="HAMAP" id="MF_00518">
    <property type="entry name" value="Deacylase_Dtd"/>
    <property type="match status" value="1"/>
</dbReference>
<dbReference type="InterPro" id="IPR003732">
    <property type="entry name" value="Daa-tRNA_deacyls_DTD"/>
</dbReference>
<dbReference type="InterPro" id="IPR023509">
    <property type="entry name" value="DTD-like_sf"/>
</dbReference>
<dbReference type="NCBIfam" id="TIGR00256">
    <property type="entry name" value="D-aminoacyl-tRNA deacylase"/>
    <property type="match status" value="1"/>
</dbReference>
<dbReference type="PANTHER" id="PTHR10472:SF5">
    <property type="entry name" value="D-AMINOACYL-TRNA DEACYLASE 1"/>
    <property type="match status" value="1"/>
</dbReference>
<dbReference type="PANTHER" id="PTHR10472">
    <property type="entry name" value="D-TYROSYL-TRNA TYR DEACYLASE"/>
    <property type="match status" value="1"/>
</dbReference>
<dbReference type="Pfam" id="PF02580">
    <property type="entry name" value="Tyr_Deacylase"/>
    <property type="match status" value="1"/>
</dbReference>
<dbReference type="SUPFAM" id="SSF69500">
    <property type="entry name" value="DTD-like"/>
    <property type="match status" value="1"/>
</dbReference>
<name>DTD_SHIB3</name>
<sequence>MIALIQRVTRASVTVEGEVTGEIGAGLLVLLGVEKDDDEQKANRLCERVLGYRIFSDAEGKMNLNVQQAGGSVLVVSQFTLAADTERGMRPSFSKGASPDRAEALYDYFVERCRQQEMNTQTGRFAADMQVSLVNDGPVTFWLQV</sequence>
<protein>
    <recommendedName>
        <fullName evidence="1">D-aminoacyl-tRNA deacylase</fullName>
        <shortName evidence="1">DTD</shortName>
        <ecNumber evidence="1">3.1.1.96</ecNumber>
    </recommendedName>
    <alternativeName>
        <fullName evidence="1">Gly-tRNA(Ala) deacylase</fullName>
    </alternativeName>
</protein>
<feature type="chain" id="PRO_1000127575" description="D-aminoacyl-tRNA deacylase">
    <location>
        <begin position="1"/>
        <end position="145"/>
    </location>
</feature>
<feature type="short sequence motif" description="Gly-cisPro motif, important for rejection of L-amino acids" evidence="1">
    <location>
        <begin position="137"/>
        <end position="138"/>
    </location>
</feature>
<organism>
    <name type="scientific">Shigella boydii serotype 18 (strain CDC 3083-94 / BS512)</name>
    <dbReference type="NCBI Taxonomy" id="344609"/>
    <lineage>
        <taxon>Bacteria</taxon>
        <taxon>Pseudomonadati</taxon>
        <taxon>Pseudomonadota</taxon>
        <taxon>Gammaproteobacteria</taxon>
        <taxon>Enterobacterales</taxon>
        <taxon>Enterobacteriaceae</taxon>
        <taxon>Shigella</taxon>
    </lineage>
</organism>
<proteinExistence type="inferred from homology"/>
<keyword id="KW-0963">Cytoplasm</keyword>
<keyword id="KW-0378">Hydrolase</keyword>
<keyword id="KW-1185">Reference proteome</keyword>
<keyword id="KW-0694">RNA-binding</keyword>
<keyword id="KW-0820">tRNA-binding</keyword>
<reference key="1">
    <citation type="submission" date="2008-05" db="EMBL/GenBank/DDBJ databases">
        <title>Complete sequence of Shigella boydii serotype 18 strain BS512.</title>
        <authorList>
            <person name="Rasko D.A."/>
            <person name="Rosovitz M."/>
            <person name="Maurelli A.T."/>
            <person name="Myers G."/>
            <person name="Seshadri R."/>
            <person name="Cer R."/>
            <person name="Jiang L."/>
            <person name="Ravel J."/>
            <person name="Sebastian Y."/>
        </authorList>
    </citation>
    <scope>NUCLEOTIDE SEQUENCE [LARGE SCALE GENOMIC DNA]</scope>
    <source>
        <strain>CDC 3083-94 / BS512</strain>
    </source>
</reference>
<gene>
    <name evidence="1" type="primary">dtd</name>
    <name type="ordered locus">SbBS512_E4365</name>
</gene>
<evidence type="ECO:0000255" key="1">
    <source>
        <dbReference type="HAMAP-Rule" id="MF_00518"/>
    </source>
</evidence>